<dbReference type="SMR" id="B3EWT3"/>
<dbReference type="GO" id="GO:0005576">
    <property type="term" value="C:extracellular region"/>
    <property type="evidence" value="ECO:0007669"/>
    <property type="project" value="UniProtKB-SubCell"/>
</dbReference>
<dbReference type="GO" id="GO:0008200">
    <property type="term" value="F:ion channel inhibitor activity"/>
    <property type="evidence" value="ECO:0007669"/>
    <property type="project" value="InterPro"/>
</dbReference>
<dbReference type="GO" id="GO:0090729">
    <property type="term" value="F:toxin activity"/>
    <property type="evidence" value="ECO:0007669"/>
    <property type="project" value="UniProtKB-KW"/>
</dbReference>
<dbReference type="InterPro" id="IPR004169">
    <property type="entry name" value="Spidertoxin"/>
</dbReference>
<dbReference type="Pfam" id="PF02819">
    <property type="entry name" value="Toxin_9"/>
    <property type="match status" value="1"/>
</dbReference>
<dbReference type="SUPFAM" id="SSF57059">
    <property type="entry name" value="omega toxin-like"/>
    <property type="match status" value="1"/>
</dbReference>
<accession>B3EWT3</accession>
<reference key="1">
    <citation type="journal article" date="2012" name="FEBS J.">
        <title>Multicomponent venom of the spider Cupiennius salei: a bioanalytical investigation applying different strategies.</title>
        <authorList>
            <person name="Trachsel C."/>
            <person name="Siegemund D."/>
            <person name="Kampfer U."/>
            <person name="Kopp L.S."/>
            <person name="Buhr C."/>
            <person name="Grossmann J."/>
            <person name="Luthi C."/>
            <person name="Cunningham M."/>
            <person name="Nentwig W."/>
            <person name="Kuhn-Nentwig L."/>
            <person name="Schurch S."/>
            <person name="Schaller J."/>
        </authorList>
    </citation>
    <scope>PROTEIN SEQUENCE</scope>
    <scope>MASS SPECTROMETRY</scope>
    <scope>DISULFIDE BONDS</scope>
    <source>
        <tissue>Venom</tissue>
    </source>
</reference>
<protein>
    <recommendedName>
        <fullName evidence="4">Toxin CSTX-18</fullName>
    </recommendedName>
</protein>
<proteinExistence type="evidence at protein level"/>
<comment type="subcellular location">
    <subcellularLocation>
        <location evidence="3">Secreted</location>
    </subcellularLocation>
</comment>
<comment type="tissue specificity">
    <text evidence="5">Expressed by the venom gland.</text>
</comment>
<comment type="domain">
    <text evidence="1">The presence of a 'disulfide through disulfide knot' structurally defines this protein as a knottin.</text>
</comment>
<comment type="PTM">
    <text evidence="3">Contains 4 disulfide bonds.</text>
</comment>
<comment type="mass spectrometry" mass="5598.828" method="Electrospray" evidence="3"/>
<comment type="similarity">
    <text evidence="2">Belongs to the neurotoxin 02 (plectoxin) family. 07 subfamily.</text>
</comment>
<organism>
    <name type="scientific">Cupiennius salei</name>
    <name type="common">American wandering spider</name>
    <dbReference type="NCBI Taxonomy" id="6928"/>
    <lineage>
        <taxon>Eukaryota</taxon>
        <taxon>Metazoa</taxon>
        <taxon>Ecdysozoa</taxon>
        <taxon>Arthropoda</taxon>
        <taxon>Chelicerata</taxon>
        <taxon>Arachnida</taxon>
        <taxon>Araneae</taxon>
        <taxon>Araneomorphae</taxon>
        <taxon>Entelegynae</taxon>
        <taxon>Lycosoidea</taxon>
        <taxon>Ctenidae</taxon>
        <taxon>Cupiennius</taxon>
    </lineage>
</organism>
<keyword id="KW-0903">Direct protein sequencing</keyword>
<keyword id="KW-1015">Disulfide bond</keyword>
<keyword id="KW-0960">Knottin</keyword>
<keyword id="KW-0964">Secreted</keyword>
<keyword id="KW-0800">Toxin</keyword>
<sequence length="51" mass="5611">GLWIKGNYCLRGRCLPGGRKCCNGRPCECFAKICSCKPKLIGKLSALKKHT</sequence>
<evidence type="ECO:0000250" key="1">
    <source>
        <dbReference type="UniProtKB" id="P58604"/>
    </source>
</evidence>
<evidence type="ECO:0000255" key="2"/>
<evidence type="ECO:0000269" key="3">
    <source>
    </source>
</evidence>
<evidence type="ECO:0000303" key="4">
    <source>
    </source>
</evidence>
<evidence type="ECO:0000305" key="5">
    <source>
    </source>
</evidence>
<feature type="peptide" id="PRO_0000421190" description="Toxin CSTX-18" evidence="3">
    <location>
        <begin position="1"/>
        <end position="51"/>
    </location>
</feature>
<feature type="disulfide bond" evidence="1">
    <location>
        <begin position="9"/>
        <end position="22"/>
    </location>
</feature>
<feature type="disulfide bond" evidence="1">
    <location>
        <begin position="14"/>
        <end position="27"/>
    </location>
</feature>
<feature type="disulfide bond" evidence="1">
    <location>
        <begin position="21"/>
        <end position="36"/>
    </location>
</feature>
<feature type="disulfide bond" evidence="1">
    <location>
        <begin position="29"/>
        <end position="34"/>
    </location>
</feature>
<name>TX27A_CUPSA</name>